<comment type="function">
    <text evidence="1">Required for the first step of histidine biosynthesis. May allow the feedback regulation of ATP phosphoribosyltransferase activity by histidine (By similarity).</text>
</comment>
<comment type="pathway">
    <text>Amino-acid biosynthesis; L-histidine biosynthesis; L-histidine from 5-phospho-alpha-D-ribose 1-diphosphate: step 1/9.</text>
</comment>
<comment type="subunit">
    <text evidence="1">Heteromultimer composed of HisG and HisZ subunits.</text>
</comment>
<comment type="subcellular location">
    <subcellularLocation>
        <location evidence="1">Cytoplasm</location>
    </subcellularLocation>
</comment>
<comment type="miscellaneous">
    <text>This function is generally fulfilled by the C-terminal part of HisG, which is missing in some bacteria such as this one.</text>
</comment>
<comment type="similarity">
    <text evidence="2">Belongs to the class-II aminoacyl-tRNA synthetase family. HisZ subfamily.</text>
</comment>
<name>HISZ_NOSS1</name>
<sequence length="404" mass="45397">MVYQPAAGARDLLPLDVAQKRWIEDKLQQVFHRWGYHRIITSTLERMDTLMAGEAIQRQMVIQLQNSEDEELGLRPELTASIARAVVTRMANLRHPQRLYYNANVFRRIWENRHNRQQEFYQAGVELLGVGGLLANAEVLLLAGNCLTALGLQDWHLILGEAGITRSLLDAFPINLRAKVRSAIAHLDRITIDTLPLTDELRERARIMLDLRGNSADVLQKVSSLNLDAEQQEAVNNLKSLVELLESGGKFPIILDLSLIQTIDYYTGLVFEIVNNTDSQARVLGRGGRYDQLLGLYHPQGENIPGIGFVLNIEDLYQVLLSTQQLPQETPASDWLVVPENPAAHSAAFAYAQKLRESPDLVRVELDLGSTDRATIKQYARDRSIAQIAWIKADGSPIIEKVSQ</sequence>
<protein>
    <recommendedName>
        <fullName>ATP phosphoribosyltransferase regulatory subunit</fullName>
    </recommendedName>
</protein>
<proteinExistence type="inferred from homology"/>
<accession>Q8YT12</accession>
<reference key="1">
    <citation type="journal article" date="2001" name="DNA Res.">
        <title>Complete genomic sequence of the filamentous nitrogen-fixing cyanobacterium Anabaena sp. strain PCC 7120.</title>
        <authorList>
            <person name="Kaneko T."/>
            <person name="Nakamura Y."/>
            <person name="Wolk C.P."/>
            <person name="Kuritz T."/>
            <person name="Sasamoto S."/>
            <person name="Watanabe A."/>
            <person name="Iriguchi M."/>
            <person name="Ishikawa A."/>
            <person name="Kawashima K."/>
            <person name="Kimura T."/>
            <person name="Kishida Y."/>
            <person name="Kohara M."/>
            <person name="Matsumoto M."/>
            <person name="Matsuno A."/>
            <person name="Muraki A."/>
            <person name="Nakazaki N."/>
            <person name="Shimpo S."/>
            <person name="Sugimoto M."/>
            <person name="Takazawa M."/>
            <person name="Yamada M."/>
            <person name="Yasuda M."/>
            <person name="Tabata S."/>
        </authorList>
    </citation>
    <scope>NUCLEOTIDE SEQUENCE [LARGE SCALE GENOMIC DNA]</scope>
    <source>
        <strain>PCC 7120 / SAG 25.82 / UTEX 2576</strain>
    </source>
</reference>
<keyword id="KW-0028">Amino-acid biosynthesis</keyword>
<keyword id="KW-0963">Cytoplasm</keyword>
<keyword id="KW-0368">Histidine biosynthesis</keyword>
<keyword id="KW-1185">Reference proteome</keyword>
<organism>
    <name type="scientific">Nostoc sp. (strain PCC 7120 / SAG 25.82 / UTEX 2576)</name>
    <dbReference type="NCBI Taxonomy" id="103690"/>
    <lineage>
        <taxon>Bacteria</taxon>
        <taxon>Bacillati</taxon>
        <taxon>Cyanobacteriota</taxon>
        <taxon>Cyanophyceae</taxon>
        <taxon>Nostocales</taxon>
        <taxon>Nostocaceae</taxon>
        <taxon>Nostoc</taxon>
    </lineage>
</organism>
<gene>
    <name type="primary">hisZ</name>
    <name type="ordered locus">all2915</name>
</gene>
<evidence type="ECO:0000250" key="1"/>
<evidence type="ECO:0000305" key="2"/>
<feature type="chain" id="PRO_0000171020" description="ATP phosphoribosyltransferase regulatory subunit">
    <location>
        <begin position="1"/>
        <end position="404"/>
    </location>
</feature>
<dbReference type="EMBL" id="BA000019">
    <property type="protein sequence ID" value="BAB74614.1"/>
    <property type="molecule type" value="Genomic_DNA"/>
</dbReference>
<dbReference type="PIR" id="AD2170">
    <property type="entry name" value="AD2170"/>
</dbReference>
<dbReference type="RefSeq" id="WP_010997066.1">
    <property type="nucleotide sequence ID" value="NZ_RSCN01000003.1"/>
</dbReference>
<dbReference type="SMR" id="Q8YT12"/>
<dbReference type="STRING" id="103690.gene:10494950"/>
<dbReference type="KEGG" id="ana:all2915"/>
<dbReference type="eggNOG" id="COG3705">
    <property type="taxonomic scope" value="Bacteria"/>
</dbReference>
<dbReference type="OrthoDB" id="9800814at2"/>
<dbReference type="UniPathway" id="UPA00031">
    <property type="reaction ID" value="UER00006"/>
</dbReference>
<dbReference type="Proteomes" id="UP000002483">
    <property type="component" value="Chromosome"/>
</dbReference>
<dbReference type="GO" id="GO:0005737">
    <property type="term" value="C:cytoplasm"/>
    <property type="evidence" value="ECO:0007669"/>
    <property type="project" value="UniProtKB-SubCell"/>
</dbReference>
<dbReference type="GO" id="GO:0004821">
    <property type="term" value="F:histidine-tRNA ligase activity"/>
    <property type="evidence" value="ECO:0007669"/>
    <property type="project" value="TreeGrafter"/>
</dbReference>
<dbReference type="GO" id="GO:0006427">
    <property type="term" value="P:histidyl-tRNA aminoacylation"/>
    <property type="evidence" value="ECO:0007669"/>
    <property type="project" value="TreeGrafter"/>
</dbReference>
<dbReference type="GO" id="GO:0000105">
    <property type="term" value="P:L-histidine biosynthetic process"/>
    <property type="evidence" value="ECO:0007669"/>
    <property type="project" value="UniProtKB-UniRule"/>
</dbReference>
<dbReference type="CDD" id="cd00773">
    <property type="entry name" value="HisRS-like_core"/>
    <property type="match status" value="1"/>
</dbReference>
<dbReference type="Gene3D" id="3.30.930.10">
    <property type="entry name" value="Bira Bifunctional Protein, Domain 2"/>
    <property type="match status" value="1"/>
</dbReference>
<dbReference type="HAMAP" id="MF_00125">
    <property type="entry name" value="HisZ"/>
    <property type="match status" value="1"/>
</dbReference>
<dbReference type="InterPro" id="IPR006195">
    <property type="entry name" value="aa-tRNA-synth_II"/>
</dbReference>
<dbReference type="InterPro" id="IPR045864">
    <property type="entry name" value="aa-tRNA-synth_II/BPL/LPL"/>
</dbReference>
<dbReference type="InterPro" id="IPR041715">
    <property type="entry name" value="HisRS-like_core"/>
</dbReference>
<dbReference type="InterPro" id="IPR004516">
    <property type="entry name" value="HisRS/HisZ"/>
</dbReference>
<dbReference type="InterPro" id="IPR004517">
    <property type="entry name" value="HisZ"/>
</dbReference>
<dbReference type="NCBIfam" id="TIGR00443">
    <property type="entry name" value="hisZ_biosyn_reg"/>
    <property type="match status" value="1"/>
</dbReference>
<dbReference type="NCBIfam" id="NF008940">
    <property type="entry name" value="PRK12292.2-3"/>
    <property type="match status" value="1"/>
</dbReference>
<dbReference type="PANTHER" id="PTHR43707:SF1">
    <property type="entry name" value="HISTIDINE--TRNA LIGASE, MITOCHONDRIAL-RELATED"/>
    <property type="match status" value="1"/>
</dbReference>
<dbReference type="PANTHER" id="PTHR43707">
    <property type="entry name" value="HISTIDYL-TRNA SYNTHETASE"/>
    <property type="match status" value="1"/>
</dbReference>
<dbReference type="Pfam" id="PF13393">
    <property type="entry name" value="tRNA-synt_His"/>
    <property type="match status" value="1"/>
</dbReference>
<dbReference type="PIRSF" id="PIRSF001549">
    <property type="entry name" value="His-tRNA_synth"/>
    <property type="match status" value="1"/>
</dbReference>
<dbReference type="SUPFAM" id="SSF55681">
    <property type="entry name" value="Class II aaRS and biotin synthetases"/>
    <property type="match status" value="1"/>
</dbReference>
<dbReference type="PROSITE" id="PS50862">
    <property type="entry name" value="AA_TRNA_LIGASE_II"/>
    <property type="match status" value="1"/>
</dbReference>